<dbReference type="EMBL" id="DQ214330">
    <property type="protein sequence ID" value="ACH44324.1"/>
    <property type="molecule type" value="mRNA"/>
</dbReference>
<dbReference type="RefSeq" id="NP_001232138.1">
    <property type="nucleotide sequence ID" value="NM_001245209.1"/>
</dbReference>
<dbReference type="RefSeq" id="XP_002200405.1">
    <property type="nucleotide sequence ID" value="XM_002200369.3"/>
</dbReference>
<dbReference type="RefSeq" id="XP_030119840.1">
    <property type="nucleotide sequence ID" value="XM_030263980.3"/>
</dbReference>
<dbReference type="SMR" id="B5FZ63"/>
<dbReference type="STRING" id="59729.ENSTGUP00000034421"/>
<dbReference type="Ensembl" id="ENSTGUT00000019603.1">
    <property type="protein sequence ID" value="ENSTGUP00000034421.1"/>
    <property type="gene ID" value="ENSTGUG00000026246.1"/>
</dbReference>
<dbReference type="GeneID" id="100190235"/>
<dbReference type="KEGG" id="tgu:100190235"/>
<dbReference type="CTD" id="56943"/>
<dbReference type="GeneTree" id="ENSGT00390000011748"/>
<dbReference type="InParanoid" id="B5FZ63"/>
<dbReference type="OMA" id="RLMCRNI"/>
<dbReference type="OrthoDB" id="6221744at2759"/>
<dbReference type="Proteomes" id="UP000007754">
    <property type="component" value="Chromosome 2"/>
</dbReference>
<dbReference type="GO" id="GO:0071819">
    <property type="term" value="C:DUBm complex"/>
    <property type="evidence" value="ECO:0007669"/>
    <property type="project" value="UniProtKB-UniRule"/>
</dbReference>
<dbReference type="GO" id="GO:0005739">
    <property type="term" value="C:mitochondrion"/>
    <property type="evidence" value="ECO:0007669"/>
    <property type="project" value="Ensembl"/>
</dbReference>
<dbReference type="GO" id="GO:0044615">
    <property type="term" value="C:nuclear pore nuclear basket"/>
    <property type="evidence" value="ECO:0007669"/>
    <property type="project" value="Ensembl"/>
</dbReference>
<dbReference type="GO" id="GO:0005654">
    <property type="term" value="C:nucleoplasm"/>
    <property type="evidence" value="ECO:0007669"/>
    <property type="project" value="UniProtKB-SubCell"/>
</dbReference>
<dbReference type="GO" id="GO:0000124">
    <property type="term" value="C:SAGA complex"/>
    <property type="evidence" value="ECO:0000250"/>
    <property type="project" value="UniProtKB"/>
</dbReference>
<dbReference type="GO" id="GO:0070390">
    <property type="term" value="C:transcription export complex 2"/>
    <property type="evidence" value="ECO:0007669"/>
    <property type="project" value="UniProtKB-UniRule"/>
</dbReference>
<dbReference type="GO" id="GO:0003713">
    <property type="term" value="F:transcription coactivator activity"/>
    <property type="evidence" value="ECO:0000250"/>
    <property type="project" value="UniProtKB"/>
</dbReference>
<dbReference type="GO" id="GO:0006325">
    <property type="term" value="P:chromatin organization"/>
    <property type="evidence" value="ECO:0007669"/>
    <property type="project" value="UniProtKB-KW"/>
</dbReference>
<dbReference type="GO" id="GO:0016973">
    <property type="term" value="P:poly(A)+ mRNA export from nucleus"/>
    <property type="evidence" value="ECO:0007669"/>
    <property type="project" value="Ensembl"/>
</dbReference>
<dbReference type="GO" id="GO:0045893">
    <property type="term" value="P:positive regulation of DNA-templated transcription"/>
    <property type="evidence" value="ECO:0000250"/>
    <property type="project" value="UniProtKB"/>
</dbReference>
<dbReference type="GO" id="GO:0015031">
    <property type="term" value="P:protein transport"/>
    <property type="evidence" value="ECO:0007669"/>
    <property type="project" value="UniProtKB-KW"/>
</dbReference>
<dbReference type="GO" id="GO:0006357">
    <property type="term" value="P:regulation of transcription by RNA polymerase II"/>
    <property type="evidence" value="ECO:0007669"/>
    <property type="project" value="Ensembl"/>
</dbReference>
<dbReference type="GO" id="GO:0006368">
    <property type="term" value="P:transcription elongation by RNA polymerase II"/>
    <property type="evidence" value="ECO:0007669"/>
    <property type="project" value="UniProtKB-UniRule"/>
</dbReference>
<dbReference type="FunFam" id="1.10.246.140:FF:000001">
    <property type="entry name" value="Transcription and mRNA export factor ENY2"/>
    <property type="match status" value="1"/>
</dbReference>
<dbReference type="Gene3D" id="1.10.246.140">
    <property type="match status" value="1"/>
</dbReference>
<dbReference type="HAMAP" id="MF_03046">
    <property type="entry name" value="ENY2_Sus1"/>
    <property type="match status" value="1"/>
</dbReference>
<dbReference type="InterPro" id="IPR018783">
    <property type="entry name" value="TF_ENY2"/>
</dbReference>
<dbReference type="InterPro" id="IPR038212">
    <property type="entry name" value="TF_EnY2_sf"/>
</dbReference>
<dbReference type="PANTHER" id="PTHR12514">
    <property type="entry name" value="ENHANCER OF YELLOW 2 TRANSCRIPTION FACTOR"/>
    <property type="match status" value="1"/>
</dbReference>
<dbReference type="Pfam" id="PF10163">
    <property type="entry name" value="EnY2"/>
    <property type="match status" value="1"/>
</dbReference>
<organism>
    <name type="scientific">Taeniopygia guttata</name>
    <name type="common">Zebra finch</name>
    <name type="synonym">Poephila guttata</name>
    <dbReference type="NCBI Taxonomy" id="59729"/>
    <lineage>
        <taxon>Eukaryota</taxon>
        <taxon>Metazoa</taxon>
        <taxon>Chordata</taxon>
        <taxon>Craniata</taxon>
        <taxon>Vertebrata</taxon>
        <taxon>Euteleostomi</taxon>
        <taxon>Archelosauria</taxon>
        <taxon>Archosauria</taxon>
        <taxon>Dinosauria</taxon>
        <taxon>Saurischia</taxon>
        <taxon>Theropoda</taxon>
        <taxon>Coelurosauria</taxon>
        <taxon>Aves</taxon>
        <taxon>Neognathae</taxon>
        <taxon>Neoaves</taxon>
        <taxon>Telluraves</taxon>
        <taxon>Australaves</taxon>
        <taxon>Passeriformes</taxon>
        <taxon>Passeroidea</taxon>
        <taxon>Estrildidae</taxon>
        <taxon>Estrildinae</taxon>
        <taxon>Taeniopygia</taxon>
    </lineage>
</organism>
<gene>
    <name evidence="2" type="primary">ENY2</name>
</gene>
<sequence>MNKDAQMRATINQKLIETGERERLKELLRAKLIECGWKDQLKAHCKDVIKEKGLEHVTVDDLVAEITPKGRALVPDSVKKELLQRIRTFLAQHASL</sequence>
<feature type="chain" id="PRO_0000367546" description="Transcription and mRNA export factor ENY2">
    <location>
        <begin position="1"/>
        <end position="96"/>
    </location>
</feature>
<reference key="1">
    <citation type="journal article" date="2006" name="Proc. Natl. Acad. Sci. U.S.A.">
        <title>A molecular neuroethological approach for identifying and characterizing a cascade of behaviorally regulated genes.</title>
        <authorList>
            <person name="Wada K."/>
            <person name="Howard J.T."/>
            <person name="McConnell P."/>
            <person name="Whitney O."/>
            <person name="Lints T."/>
            <person name="Rivas M.V."/>
            <person name="Horita H."/>
            <person name="Patterson M.A."/>
            <person name="White S.A."/>
            <person name="Scharff C."/>
            <person name="Haesler S."/>
            <person name="Zhao S."/>
            <person name="Sakaguchi H."/>
            <person name="Hagiwara M."/>
            <person name="Shiraki T."/>
            <person name="Hirozane-Kishikawa T."/>
            <person name="Skene P."/>
            <person name="Hayashizaki Y."/>
            <person name="Carninci P."/>
            <person name="Jarvis E.D."/>
        </authorList>
    </citation>
    <scope>NUCLEOTIDE SEQUENCE [LARGE SCALE MRNA]</scope>
    <source>
        <tissue>Brain</tissue>
    </source>
</reference>
<evidence type="ECO:0000250" key="1"/>
<evidence type="ECO:0000255" key="2">
    <source>
        <dbReference type="HAMAP-Rule" id="MF_03046"/>
    </source>
</evidence>
<protein>
    <recommendedName>
        <fullName evidence="2">Transcription and mRNA export factor ENY2</fullName>
    </recommendedName>
    <alternativeName>
        <fullName evidence="2">Enhancer of yellow 2 transcription factor homolog</fullName>
    </alternativeName>
</protein>
<keyword id="KW-0010">Activator</keyword>
<keyword id="KW-0156">Chromatin regulator</keyword>
<keyword id="KW-0509">mRNA transport</keyword>
<keyword id="KW-0539">Nucleus</keyword>
<keyword id="KW-0653">Protein transport</keyword>
<keyword id="KW-1185">Reference proteome</keyword>
<keyword id="KW-0804">Transcription</keyword>
<keyword id="KW-0805">Transcription regulation</keyword>
<keyword id="KW-0811">Translocation</keyword>
<keyword id="KW-0813">Transport</keyword>
<proteinExistence type="inferred from homology"/>
<comment type="function">
    <text evidence="1">Involved in mRNA export coupled transcription activation by association with both the TREX-2 and the SAGA complexes. The transcription regulatory histone acetylation (HAT) complex SAGA is a multiprotein complex that activates transcription by remodeling chromatin and mediating histone acetylation and deubiquitination. Within the SAGA complex, participates in a subcomplex that specifically deubiquitinates histones. The SAGA complex is recruited to specific gene promoters by activators, where it is required for transcription. The TREX-2 complex functions in docking export-competent ribonucleoprotein particles (mRNPs) to the nuclear entrance of the nuclear pore complex (nuclear basket). TREX-2 participates in mRNA export and accurate chromatin positioning in the nucleus by tethering genes to the nuclear periphery (By similarity).</text>
</comment>
<comment type="subunit">
    <text evidence="1">Component of the nuclear pore complex (NPC)-associated TREX-2 complex (transcription and export complex 2). Component of the SAGA transcription coactivator-HAT complex. Within the SAGA complex, participates in a subcomplex of SAGA called the DUB module (deubiquitination module) (By similarity).</text>
</comment>
<comment type="subcellular location">
    <subcellularLocation>
        <location evidence="2">Nucleus</location>
        <location evidence="2">Nucleoplasm</location>
    </subcellularLocation>
</comment>
<comment type="similarity">
    <text evidence="2">Belongs to the ENY2 family.</text>
</comment>
<accession>B5FZ63</accession>
<name>ENY2_TAEGU</name>